<proteinExistence type="inferred from homology"/>
<sequence length="391" mass="40953">MSIVRMTDLALSGKRVLIRQDLNVPIDQGRITSEQRIIASLPTIRVALERGAAVMVTSHLGRPKEGVWSEEDSLAPVAKRLSQLLGIEVPLRRDWVDGVQVAPGQLVLLENCRMNVGEAENDEALARKYAALCDVFVMDAFGTAHRAQASTHGVICCAAIAAGGPLLMAELDALSRGLKHPVKPLLAIVGGSKVSTKLELLSNLVNNVEQLITGGGIANTFLAAAGYPIGKSLYEADLIETAREIITVAKARGAEIPLPTDVVVAKQFLPGVTATVKTVDAIVADDLILDIGPQTARHYAALIETAATVVWNGPVGVFEFDAFSKGTEVLARAVAASSAFSIAGGGDTLAAIDKYGVADQISYISTGGGAFLEFLEGKTLPAVAALQARSG</sequence>
<name>PGK_XYLFT</name>
<protein>
    <recommendedName>
        <fullName evidence="1">Phosphoglycerate kinase</fullName>
        <ecNumber evidence="1">2.7.2.3</ecNumber>
    </recommendedName>
</protein>
<keyword id="KW-0067">ATP-binding</keyword>
<keyword id="KW-0963">Cytoplasm</keyword>
<keyword id="KW-0324">Glycolysis</keyword>
<keyword id="KW-0418">Kinase</keyword>
<keyword id="KW-0547">Nucleotide-binding</keyword>
<keyword id="KW-1185">Reference proteome</keyword>
<keyword id="KW-0808">Transferase</keyword>
<comment type="catalytic activity">
    <reaction evidence="1">
        <text>(2R)-3-phosphoglycerate + ATP = (2R)-3-phospho-glyceroyl phosphate + ADP</text>
        <dbReference type="Rhea" id="RHEA:14801"/>
        <dbReference type="ChEBI" id="CHEBI:30616"/>
        <dbReference type="ChEBI" id="CHEBI:57604"/>
        <dbReference type="ChEBI" id="CHEBI:58272"/>
        <dbReference type="ChEBI" id="CHEBI:456216"/>
        <dbReference type="EC" id="2.7.2.3"/>
    </reaction>
</comment>
<comment type="pathway">
    <text evidence="1">Carbohydrate degradation; glycolysis; pyruvate from D-glyceraldehyde 3-phosphate: step 2/5.</text>
</comment>
<comment type="subunit">
    <text evidence="1">Monomer.</text>
</comment>
<comment type="subcellular location">
    <subcellularLocation>
        <location evidence="1">Cytoplasm</location>
    </subcellularLocation>
</comment>
<comment type="similarity">
    <text evidence="1">Belongs to the phosphoglycerate kinase family.</text>
</comment>
<organism>
    <name type="scientific">Xylella fastidiosa (strain Temecula1 / ATCC 700964)</name>
    <dbReference type="NCBI Taxonomy" id="183190"/>
    <lineage>
        <taxon>Bacteria</taxon>
        <taxon>Pseudomonadati</taxon>
        <taxon>Pseudomonadota</taxon>
        <taxon>Gammaproteobacteria</taxon>
        <taxon>Lysobacterales</taxon>
        <taxon>Lysobacteraceae</taxon>
        <taxon>Xylella</taxon>
    </lineage>
</organism>
<reference key="1">
    <citation type="journal article" date="2003" name="J. Bacteriol.">
        <title>Comparative analyses of the complete genome sequences of Pierce's disease and citrus variegated chlorosis strains of Xylella fastidiosa.</title>
        <authorList>
            <person name="Van Sluys M.A."/>
            <person name="de Oliveira M.C."/>
            <person name="Monteiro-Vitorello C.B."/>
            <person name="Miyaki C.Y."/>
            <person name="Furlan L.R."/>
            <person name="Camargo L.E.A."/>
            <person name="da Silva A.C.R."/>
            <person name="Moon D.H."/>
            <person name="Takita M.A."/>
            <person name="Lemos E.G.M."/>
            <person name="Machado M.A."/>
            <person name="Ferro M.I.T."/>
            <person name="da Silva F.R."/>
            <person name="Goldman M.H.S."/>
            <person name="Goldman G.H."/>
            <person name="Lemos M.V.F."/>
            <person name="El-Dorry H."/>
            <person name="Tsai S.M."/>
            <person name="Carrer H."/>
            <person name="Carraro D.M."/>
            <person name="de Oliveira R.C."/>
            <person name="Nunes L.R."/>
            <person name="Siqueira W.J."/>
            <person name="Coutinho L.L."/>
            <person name="Kimura E.T."/>
            <person name="Ferro E.S."/>
            <person name="Harakava R."/>
            <person name="Kuramae E.E."/>
            <person name="Marino C.L."/>
            <person name="Giglioti E."/>
            <person name="Abreu I.L."/>
            <person name="Alves L.M.C."/>
            <person name="do Amaral A.M."/>
            <person name="Baia G.S."/>
            <person name="Blanco S.R."/>
            <person name="Brito M.S."/>
            <person name="Cannavan F.S."/>
            <person name="Celestino A.V."/>
            <person name="da Cunha A.F."/>
            <person name="Fenille R.C."/>
            <person name="Ferro J.A."/>
            <person name="Formighieri E.F."/>
            <person name="Kishi L.T."/>
            <person name="Leoni S.G."/>
            <person name="Oliveira A.R."/>
            <person name="Rosa V.E. Jr."/>
            <person name="Sassaki F.T."/>
            <person name="Sena J.A.D."/>
            <person name="de Souza A.A."/>
            <person name="Truffi D."/>
            <person name="Tsukumo F."/>
            <person name="Yanai G.M."/>
            <person name="Zaros L.G."/>
            <person name="Civerolo E.L."/>
            <person name="Simpson A.J.G."/>
            <person name="Almeida N.F. Jr."/>
            <person name="Setubal J.C."/>
            <person name="Kitajima J.P."/>
        </authorList>
    </citation>
    <scope>NUCLEOTIDE SEQUENCE [LARGE SCALE GENOMIC DNA]</scope>
    <source>
        <strain>Temecula1 / ATCC 700964</strain>
    </source>
</reference>
<feature type="chain" id="PRO_0000146042" description="Phosphoglycerate kinase">
    <location>
        <begin position="1"/>
        <end position="391"/>
    </location>
</feature>
<feature type="binding site" evidence="1">
    <location>
        <begin position="21"/>
        <end position="23"/>
    </location>
    <ligand>
        <name>substrate</name>
    </ligand>
</feature>
<feature type="binding site" evidence="1">
    <location>
        <position position="36"/>
    </location>
    <ligand>
        <name>substrate</name>
    </ligand>
</feature>
<feature type="binding site" evidence="1">
    <location>
        <begin position="59"/>
        <end position="62"/>
    </location>
    <ligand>
        <name>substrate</name>
    </ligand>
</feature>
<feature type="binding site" evidence="1">
    <location>
        <position position="113"/>
    </location>
    <ligand>
        <name>substrate</name>
    </ligand>
</feature>
<feature type="binding site" evidence="1">
    <location>
        <position position="146"/>
    </location>
    <ligand>
        <name>substrate</name>
    </ligand>
</feature>
<feature type="binding site" evidence="1">
    <location>
        <position position="197"/>
    </location>
    <ligand>
        <name>ATP</name>
        <dbReference type="ChEBI" id="CHEBI:30616"/>
    </ligand>
</feature>
<feature type="binding site" evidence="1">
    <location>
        <position position="319"/>
    </location>
    <ligand>
        <name>ATP</name>
        <dbReference type="ChEBI" id="CHEBI:30616"/>
    </ligand>
</feature>
<feature type="binding site" evidence="1">
    <location>
        <begin position="345"/>
        <end position="348"/>
    </location>
    <ligand>
        <name>ATP</name>
        <dbReference type="ChEBI" id="CHEBI:30616"/>
    </ligand>
</feature>
<dbReference type="EC" id="2.7.2.3" evidence="1"/>
<dbReference type="EMBL" id="AE009442">
    <property type="protein sequence ID" value="AAO29679.1"/>
    <property type="molecule type" value="Genomic_DNA"/>
</dbReference>
<dbReference type="RefSeq" id="WP_011098278.1">
    <property type="nucleotide sequence ID" value="NC_004556.1"/>
</dbReference>
<dbReference type="SMR" id="Q87AH8"/>
<dbReference type="KEGG" id="xft:PD_1847"/>
<dbReference type="HOGENOM" id="CLU_025427_0_2_6"/>
<dbReference type="UniPathway" id="UPA00109">
    <property type="reaction ID" value="UER00185"/>
</dbReference>
<dbReference type="Proteomes" id="UP000002516">
    <property type="component" value="Chromosome"/>
</dbReference>
<dbReference type="GO" id="GO:0005829">
    <property type="term" value="C:cytosol"/>
    <property type="evidence" value="ECO:0007669"/>
    <property type="project" value="TreeGrafter"/>
</dbReference>
<dbReference type="GO" id="GO:0043531">
    <property type="term" value="F:ADP binding"/>
    <property type="evidence" value="ECO:0007669"/>
    <property type="project" value="TreeGrafter"/>
</dbReference>
<dbReference type="GO" id="GO:0005524">
    <property type="term" value="F:ATP binding"/>
    <property type="evidence" value="ECO:0007669"/>
    <property type="project" value="UniProtKB-KW"/>
</dbReference>
<dbReference type="GO" id="GO:0004618">
    <property type="term" value="F:phosphoglycerate kinase activity"/>
    <property type="evidence" value="ECO:0007669"/>
    <property type="project" value="UniProtKB-UniRule"/>
</dbReference>
<dbReference type="GO" id="GO:0006094">
    <property type="term" value="P:gluconeogenesis"/>
    <property type="evidence" value="ECO:0007669"/>
    <property type="project" value="TreeGrafter"/>
</dbReference>
<dbReference type="GO" id="GO:0006096">
    <property type="term" value="P:glycolytic process"/>
    <property type="evidence" value="ECO:0007669"/>
    <property type="project" value="UniProtKB-UniRule"/>
</dbReference>
<dbReference type="FunFam" id="3.40.50.1260:FF:000001">
    <property type="entry name" value="Phosphoglycerate kinase"/>
    <property type="match status" value="1"/>
</dbReference>
<dbReference type="FunFam" id="3.40.50.1260:FF:000002">
    <property type="entry name" value="Phosphoglycerate kinase"/>
    <property type="match status" value="1"/>
</dbReference>
<dbReference type="Gene3D" id="3.40.50.1260">
    <property type="entry name" value="Phosphoglycerate kinase, N-terminal domain"/>
    <property type="match status" value="2"/>
</dbReference>
<dbReference type="HAMAP" id="MF_00145">
    <property type="entry name" value="Phosphoglyc_kinase"/>
    <property type="match status" value="1"/>
</dbReference>
<dbReference type="InterPro" id="IPR001576">
    <property type="entry name" value="Phosphoglycerate_kinase"/>
</dbReference>
<dbReference type="InterPro" id="IPR015911">
    <property type="entry name" value="Phosphoglycerate_kinase_CS"/>
</dbReference>
<dbReference type="InterPro" id="IPR015824">
    <property type="entry name" value="Phosphoglycerate_kinase_N"/>
</dbReference>
<dbReference type="InterPro" id="IPR036043">
    <property type="entry name" value="Phosphoglycerate_kinase_sf"/>
</dbReference>
<dbReference type="PANTHER" id="PTHR11406">
    <property type="entry name" value="PHOSPHOGLYCERATE KINASE"/>
    <property type="match status" value="1"/>
</dbReference>
<dbReference type="PANTHER" id="PTHR11406:SF23">
    <property type="entry name" value="PHOSPHOGLYCERATE KINASE 1, CHLOROPLASTIC-RELATED"/>
    <property type="match status" value="1"/>
</dbReference>
<dbReference type="Pfam" id="PF00162">
    <property type="entry name" value="PGK"/>
    <property type="match status" value="1"/>
</dbReference>
<dbReference type="PIRSF" id="PIRSF000724">
    <property type="entry name" value="Pgk"/>
    <property type="match status" value="1"/>
</dbReference>
<dbReference type="PRINTS" id="PR00477">
    <property type="entry name" value="PHGLYCKINASE"/>
</dbReference>
<dbReference type="SUPFAM" id="SSF53748">
    <property type="entry name" value="Phosphoglycerate kinase"/>
    <property type="match status" value="1"/>
</dbReference>
<dbReference type="PROSITE" id="PS00111">
    <property type="entry name" value="PGLYCERATE_KINASE"/>
    <property type="match status" value="1"/>
</dbReference>
<evidence type="ECO:0000255" key="1">
    <source>
        <dbReference type="HAMAP-Rule" id="MF_00145"/>
    </source>
</evidence>
<gene>
    <name evidence="1" type="primary">pgk</name>
    <name type="ordered locus">PD_1847</name>
</gene>
<accession>Q87AH8</accession>